<protein>
    <recommendedName>
        <fullName evidence="6">RxLR effector protein Avh331</fullName>
    </recommendedName>
    <alternativeName>
        <fullName evidence="7">Avirulence homolog protein 1k</fullName>
    </alternativeName>
    <alternativeName>
        <fullName evidence="6">Avirulence homolog protein 331</fullName>
    </alternativeName>
</protein>
<dbReference type="EMBL" id="KC312954">
    <property type="protein sequence ID" value="AGC95073.1"/>
    <property type="molecule type" value="Genomic_DNA"/>
</dbReference>
<dbReference type="EMBL" id="KC312952">
    <property type="protein sequence ID" value="AGC95072.1"/>
    <property type="molecule type" value="Genomic_DNA"/>
</dbReference>
<dbReference type="EMBL" id="KC312951">
    <property type="protein sequence ID" value="AGC95071.1"/>
    <property type="molecule type" value="Genomic_DNA"/>
</dbReference>
<dbReference type="EMBL" id="EU282487">
    <property type="protein sequence ID" value="ABZ10806.1"/>
    <property type="molecule type" value="Genomic_DNA"/>
</dbReference>
<dbReference type="EMBL" id="JH159156">
    <property type="protein sequence ID" value="EGZ13866.1"/>
    <property type="molecule type" value="Genomic_DNA"/>
</dbReference>
<dbReference type="RefSeq" id="XP_009531295.1">
    <property type="nucleotide sequence ID" value="XM_009533000.1"/>
</dbReference>
<dbReference type="SMR" id="G4ZRQ7"/>
<dbReference type="STRING" id="1094619.G4ZRQ7"/>
<dbReference type="GlyCosmos" id="G4ZRQ7">
    <property type="glycosylation" value="1 site, No reported glycans"/>
</dbReference>
<dbReference type="EnsemblProtists" id="EGZ13866">
    <property type="protein sequence ID" value="EGZ13866"/>
    <property type="gene ID" value="PHYSODRAFT_286703"/>
</dbReference>
<dbReference type="GeneID" id="20640446"/>
<dbReference type="KEGG" id="psoj:PHYSODRAFT_286703"/>
<dbReference type="InParanoid" id="G4ZRQ7"/>
<dbReference type="PHI-base" id="PHI:2890"/>
<dbReference type="Proteomes" id="UP000002640">
    <property type="component" value="Unassembled WGS sequence"/>
</dbReference>
<dbReference type="GO" id="GO:0005576">
    <property type="term" value="C:extracellular region"/>
    <property type="evidence" value="ECO:0007669"/>
    <property type="project" value="UniProtKB-SubCell"/>
</dbReference>
<dbReference type="GO" id="GO:0043657">
    <property type="term" value="C:host cell"/>
    <property type="evidence" value="ECO:0007669"/>
    <property type="project" value="UniProtKB-SubCell"/>
</dbReference>
<dbReference type="InterPro" id="IPR054463">
    <property type="entry name" value="PexRD54_WY"/>
</dbReference>
<dbReference type="Pfam" id="PF22748">
    <property type="entry name" value="PexRD54_WY"/>
    <property type="match status" value="1"/>
</dbReference>
<accession>G4ZRQ7</accession>
<accession>B2C6F5</accession>
<evidence type="ECO:0000255" key="1"/>
<evidence type="ECO:0000255" key="2">
    <source>
        <dbReference type="PROSITE-ProRule" id="PRU00498"/>
    </source>
</evidence>
<evidence type="ECO:0000269" key="3">
    <source>
    </source>
</evidence>
<evidence type="ECO:0000269" key="4">
    <source>
    </source>
</evidence>
<evidence type="ECO:0000269" key="5">
    <source ref="4"/>
</evidence>
<evidence type="ECO:0000303" key="6">
    <source>
    </source>
</evidence>
<evidence type="ECO:0000303" key="7">
    <source>
    </source>
</evidence>
<evidence type="ECO:0000305" key="8"/>
<evidence type="ECO:0000305" key="9">
    <source>
    </source>
</evidence>
<evidence type="ECO:0000305" key="10">
    <source ref="4"/>
</evidence>
<feature type="signal peptide" evidence="1">
    <location>
        <begin position="1"/>
        <end position="20"/>
    </location>
</feature>
<feature type="chain" id="PRO_0000448091" description="RxLR effector protein Avh331">
    <location>
        <begin position="21"/>
        <end position="279"/>
    </location>
</feature>
<feature type="region of interest" description="W1 motif" evidence="9">
    <location>
        <begin position="129"/>
        <end position="147"/>
    </location>
</feature>
<feature type="region of interest" description="Y1 motif" evidence="9">
    <location>
        <begin position="153"/>
        <end position="174"/>
    </location>
</feature>
<feature type="region of interest" description="L motif" evidence="9">
    <location>
        <begin position="178"/>
        <end position="208"/>
    </location>
</feature>
<feature type="region of interest" description="W2 motif" evidence="9">
    <location>
        <begin position="222"/>
        <end position="240"/>
    </location>
</feature>
<feature type="region of interest" description="Y2 motif" evidence="9">
    <location>
        <begin position="250"/>
        <end position="271"/>
    </location>
</feature>
<feature type="short sequence motif" description="RxLR-dEER" evidence="9">
    <location>
        <begin position="86"/>
        <end position="106"/>
    </location>
</feature>
<feature type="glycosylation site" description="N-linked (GlcNAc...) asparagine" evidence="2">
    <location>
        <position position="100"/>
    </location>
</feature>
<sequence length="279" mass="30894">MMQWSAILIRTCFSGSGGEALTCATSEQQTRPELCFFFSVRSSWPSTISDGACLALVSAEQGATAGRNTLSLRSMMATEDMATSTRSLRSQATNVDDDANVSIENRGMNPSVLTKLGEFASTLTAGNTANKLWLMADVDPKSAFKLLGLDMPGVRFIDNPKMLQWLKFTKAYLDMKKSGFGETSAHALLYEKIGGPDLSLLLLSLKDAPDANSLVQKLTNSQFGMWHDARIEPEQLAQTVFKIQDVRKLPKNDPKLQVIDDYAKYHRKHRKFLNSIMII</sequence>
<proteinExistence type="inferred from homology"/>
<gene>
    <name evidence="6" type="primary">Avh331</name>
    <name evidence="7" type="synonym">Avr1k</name>
    <name type="ORF">PHYSODRAFT_286703</name>
</gene>
<reference key="1">
    <citation type="journal article" date="2008" name="Plant Cell">
        <title>Conserved C-terminal motifs required for avirulence and suppression of cell death by Phytophthora sojae effector Avr1b.</title>
        <authorList>
            <person name="Dou D."/>
            <person name="Kale S.D."/>
            <person name="Wang X."/>
            <person name="Chen Y."/>
            <person name="Wang Q."/>
            <person name="Wang X."/>
            <person name="Jiang R.H."/>
            <person name="Arredondo F.D."/>
            <person name="Anderson R.G."/>
            <person name="Thakur P.B."/>
            <person name="McDowell J.M."/>
            <person name="Wang Y."/>
            <person name="Tyler B.M."/>
        </authorList>
    </citation>
    <scope>NUCLEOTIDE SEQUENCE [GENOMIC DNA]</scope>
    <scope>DOMAIN</scope>
    <scope>FUNCTION</scope>
</reference>
<reference key="2">
    <citation type="journal article" date="2013" name="Mol. Plant Microbe Interact.">
        <title>Two RxLR avirulence genes in Phytophthora sojae determine soybean Rps1k-mediated disease resistance.</title>
        <authorList>
            <person name="Song T."/>
            <person name="Kale S.D."/>
            <person name="Arredondo F.D."/>
            <person name="Shen D."/>
            <person name="Su L."/>
            <person name="Liu L."/>
            <person name="Wu Y."/>
            <person name="Wang Y."/>
            <person name="Dou D."/>
            <person name="Tyler B.M."/>
        </authorList>
    </citation>
    <scope>NUCLEOTIDE SEQUENCE [GENOMIC DNA]</scope>
    <scope>FUNCTION</scope>
    <scope>DISRUPTION PHENOTYPE</scope>
    <source>
        <strain>P6497</strain>
        <strain>P6954</strain>
        <strain>Race11</strain>
    </source>
</reference>
<reference key="3">
    <citation type="journal article" date="2006" name="Science">
        <title>Phytophthora genome sequences uncover evolutionary origins and mechanisms of pathogenesis.</title>
        <authorList>
            <person name="Tyler B.M."/>
            <person name="Tripathy S."/>
            <person name="Zhang X."/>
            <person name="Dehal P."/>
            <person name="Jiang R.H.Y."/>
            <person name="Aerts A."/>
            <person name="Arredondo F.D."/>
            <person name="Baxter L."/>
            <person name="Bensasson D."/>
            <person name="Beynon J.L."/>
            <person name="Chapman J."/>
            <person name="Damasceno C.M.B."/>
            <person name="Dorrance A.E."/>
            <person name="Dou D."/>
            <person name="Dickerman A.W."/>
            <person name="Dubchak I.L."/>
            <person name="Garbelotto M."/>
            <person name="Gijzen M."/>
            <person name="Gordon S.G."/>
            <person name="Govers F."/>
            <person name="Grunwald N.J."/>
            <person name="Huang W."/>
            <person name="Ivors K.L."/>
            <person name="Jones R.W."/>
            <person name="Kamoun S."/>
            <person name="Krampis K."/>
            <person name="Lamour K.H."/>
            <person name="Lee M.-K."/>
            <person name="McDonald W.H."/>
            <person name="Medina M."/>
            <person name="Meijer H.J.G."/>
            <person name="Nordberg E.K."/>
            <person name="Maclean D.J."/>
            <person name="Ospina-Giraldo M.D."/>
            <person name="Morris P.F."/>
            <person name="Phuntumart V."/>
            <person name="Putnam N.H."/>
            <person name="Rash S."/>
            <person name="Rose J.K.C."/>
            <person name="Sakihama Y."/>
            <person name="Salamov A.A."/>
            <person name="Savidor A."/>
            <person name="Scheuring C.F."/>
            <person name="Smith B.M."/>
            <person name="Sobral B.W.S."/>
            <person name="Terry A."/>
            <person name="Torto-Alalibo T.A."/>
            <person name="Win J."/>
            <person name="Xu Z."/>
            <person name="Zhang H."/>
            <person name="Grigoriev I.V."/>
            <person name="Rokhsar D.S."/>
            <person name="Boore J.L."/>
        </authorList>
    </citation>
    <scope>NUCLEOTIDE SEQUENCE [LARGE SCALE GENOMIC DNA]</scope>
    <source>
        <strain>P6497</strain>
    </source>
</reference>
<reference key="4">
    <citation type="journal article" date="2012" name="Physiol. Mol. Plant Pathol.">
        <title>Phytophthora sojae effector Avh331 suppresses the plant defence responseby disturbing the MAPK signalling pathway.</title>
        <authorList>
            <person name="Cheng B."/>
            <person name="Yu X."/>
            <person name="Ma Z."/>
            <person name="Dong S."/>
            <person name="Dou D."/>
            <person name="Wang Y."/>
            <person name="Zheng X."/>
        </authorList>
    </citation>
    <scope>FUNCTION</scope>
</reference>
<comment type="function">
    <text evidence="3 4 5">Effector that suppresses the host mitogen-activated protein kinase (MAPK)-based plant defense activated by the Phytophthora elicitor to promote colonization of the Phytophthora pathogen (PubMed:18390593, PubMed:23530601, Ref.4). Neither directly inhibits MAPK kinase activity nor interacts with MAPK proteins but acts downstream by suppressing transcriptional activation of resistance marker genes such as FRK1, WRKY22 and WRKY29 (Ref.4). Confers avirulence in the presence of resistance protein Rps1k in host (PubMed:23530601).</text>
</comment>
<comment type="subcellular location">
    <subcellularLocation>
        <location evidence="10">Secreted</location>
    </subcellularLocation>
    <subcellularLocation>
        <location evidence="10">Host cell</location>
    </subcellularLocation>
</comment>
<comment type="domain">
    <text evidence="9">The RxLR-dEER motif acts to carry the protein into the host cell cytoplasm through binding to cell surface phosphatidylinositol-3-phosphate.</text>
</comment>
<comment type="domain">
    <text evidence="9">The C-terminal region contains 1 L, 2 W and 2 Y motifs. W, Y and L motifs are present in at least half of the identified oomycete RXLR-dEER effector candidates and W and Y are critical for the functions of the very large number of predicted oomycete effectors that contain them.</text>
</comment>
<comment type="disruption phenotype">
    <text evidence="4">Results in loss of the avirulence phenotype on soybean cultivar containing the resistance protein Rps1k.</text>
</comment>
<comment type="similarity">
    <text evidence="8">Belongs to the RxLR effector family.</text>
</comment>
<name>AV331_PHYSP</name>
<organism>
    <name type="scientific">Phytophthora sojae (strain P6497)</name>
    <name type="common">Soybean stem and root rot agent</name>
    <name type="synonym">Phytophthora megasperma f. sp. glycines</name>
    <dbReference type="NCBI Taxonomy" id="1094619"/>
    <lineage>
        <taxon>Eukaryota</taxon>
        <taxon>Sar</taxon>
        <taxon>Stramenopiles</taxon>
        <taxon>Oomycota</taxon>
        <taxon>Peronosporales</taxon>
        <taxon>Peronosporaceae</taxon>
        <taxon>Phytophthora</taxon>
    </lineage>
</organism>
<keyword id="KW-0325">Glycoprotein</keyword>
<keyword id="KW-1185">Reference proteome</keyword>
<keyword id="KW-0677">Repeat</keyword>
<keyword id="KW-0964">Secreted</keyword>
<keyword id="KW-0732">Signal</keyword>
<keyword id="KW-0843">Virulence</keyword>